<gene>
    <name type="primary">trpE</name>
    <name type="ordered locus">HVO_2454</name>
</gene>
<reference key="1">
    <citation type="journal article" date="1992" name="J. Bacteriol.">
        <title>Genes for tryptophan biosynthesis in the halophilic archaebacterium Haloferax volcanii: the trpDFEG cluster.</title>
        <authorList>
            <person name="Lam W.L."/>
            <person name="Logan S.M."/>
            <person name="Doolittle W.F."/>
        </authorList>
    </citation>
    <scope>NUCLEOTIDE SEQUENCE [GENOMIC DNA]</scope>
    <source>
        <strain>DS2 / DSM 5716 / WFD11</strain>
    </source>
</reference>
<reference key="2">
    <citation type="journal article" date="2010" name="PLoS ONE">
        <title>The complete genome sequence of Haloferax volcanii DS2, a model archaeon.</title>
        <authorList>
            <person name="Hartman A.L."/>
            <person name="Norais C."/>
            <person name="Badger J.H."/>
            <person name="Delmas S."/>
            <person name="Haldenby S."/>
            <person name="Madupu R."/>
            <person name="Robinson J."/>
            <person name="Khouri H."/>
            <person name="Ren Q."/>
            <person name="Lowe T.M."/>
            <person name="Maupin-Furlow J."/>
            <person name="Pohlschroder M."/>
            <person name="Daniels C."/>
            <person name="Pfeiffer F."/>
            <person name="Allers T."/>
            <person name="Eisen J.A."/>
        </authorList>
    </citation>
    <scope>NUCLEOTIDE SEQUENCE [LARGE SCALE GENOMIC DNA]</scope>
    <source>
        <strain>ATCC 29605 / DSM 3757 / JCM 8879 / NBRC 14742 / NCIMB 2012 / VKM B-1768 / DS2</strain>
    </source>
</reference>
<evidence type="ECO:0000250" key="1"/>
<evidence type="ECO:0000250" key="2">
    <source>
        <dbReference type="UniProtKB" id="P00897"/>
    </source>
</evidence>
<evidence type="ECO:0000305" key="3"/>
<comment type="function">
    <text evidence="1">Part of a heterotetrameric complex that catalyzes the two-step biosynthesis of anthranilate, an intermediate in the biosynthesis of L-tryptophan. In the first step, the glutamine-binding beta subunit (TrpG) of anthranilate synthase (AS) provides the glutamine amidotransferase activity which generates ammonia as a substrate that, along with chorismate, is used in the second step, catalyzed by the large alpha subunit of AS (TrpE) to produce anthranilate. In the absence of TrpG, TrpE can synthesize anthranilate directly from chorismate and high concentrations of ammonia (By similarity).</text>
</comment>
<comment type="catalytic activity">
    <reaction>
        <text>chorismate + L-glutamine = anthranilate + pyruvate + L-glutamate + H(+)</text>
        <dbReference type="Rhea" id="RHEA:21732"/>
        <dbReference type="ChEBI" id="CHEBI:15361"/>
        <dbReference type="ChEBI" id="CHEBI:15378"/>
        <dbReference type="ChEBI" id="CHEBI:16567"/>
        <dbReference type="ChEBI" id="CHEBI:29748"/>
        <dbReference type="ChEBI" id="CHEBI:29985"/>
        <dbReference type="ChEBI" id="CHEBI:58359"/>
        <dbReference type="EC" id="4.1.3.27"/>
    </reaction>
</comment>
<comment type="cofactor">
    <cofactor evidence="2">
        <name>Mg(2+)</name>
        <dbReference type="ChEBI" id="CHEBI:18420"/>
    </cofactor>
    <text evidence="2">Binds 1 Mg(2+) ion per subunit.</text>
</comment>
<comment type="activity regulation">
    <text evidence="1">Feedback inhibited by tryptophan.</text>
</comment>
<comment type="pathway">
    <text>Amino-acid biosynthesis; L-tryptophan biosynthesis; L-tryptophan from chorismate: step 1/5.</text>
</comment>
<comment type="subunit">
    <text evidence="1">Heterotetramer consisting of two non-identical subunits: a beta subunit (TrpG) and a large alpha subunit (TrpE).</text>
</comment>
<comment type="similarity">
    <text evidence="3">Belongs to the anthranilate synthase component I family.</text>
</comment>
<protein>
    <recommendedName>
        <fullName>Anthranilate synthase component 1</fullName>
        <shortName>AS</shortName>
        <shortName>ASI</shortName>
        <ecNumber>4.1.3.27</ecNumber>
    </recommendedName>
</protein>
<feature type="chain" id="PRO_0000154127" description="Anthranilate synthase component 1">
    <location>
        <begin position="1"/>
        <end position="524"/>
    </location>
</feature>
<feature type="binding site" evidence="2">
    <location>
        <position position="55"/>
    </location>
    <ligand>
        <name>L-tryptophan</name>
        <dbReference type="ChEBI" id="CHEBI:57912"/>
    </ligand>
</feature>
<feature type="binding site" evidence="2">
    <location>
        <begin position="297"/>
        <end position="299"/>
    </location>
    <ligand>
        <name>L-tryptophan</name>
        <dbReference type="ChEBI" id="CHEBI:57912"/>
    </ligand>
</feature>
<feature type="binding site" evidence="2">
    <location>
        <begin position="332"/>
        <end position="333"/>
    </location>
    <ligand>
        <name>chorismate</name>
        <dbReference type="ChEBI" id="CHEBI:29748"/>
    </ligand>
</feature>
<feature type="binding site" evidence="2">
    <location>
        <position position="359"/>
    </location>
    <ligand>
        <name>Mg(2+)</name>
        <dbReference type="ChEBI" id="CHEBI:18420"/>
    </ligand>
</feature>
<feature type="binding site" evidence="2">
    <location>
        <position position="447"/>
    </location>
    <ligand>
        <name>chorismate</name>
        <dbReference type="ChEBI" id="CHEBI:29748"/>
    </ligand>
</feature>
<feature type="binding site" evidence="2">
    <location>
        <position position="467"/>
    </location>
    <ligand>
        <name>chorismate</name>
        <dbReference type="ChEBI" id="CHEBI:29748"/>
    </ligand>
</feature>
<feature type="binding site" evidence="2">
    <location>
        <begin position="485"/>
        <end position="487"/>
    </location>
    <ligand>
        <name>chorismate</name>
        <dbReference type="ChEBI" id="CHEBI:29748"/>
    </ligand>
</feature>
<feature type="binding site" evidence="2">
    <location>
        <position position="487"/>
    </location>
    <ligand>
        <name>chorismate</name>
        <dbReference type="ChEBI" id="CHEBI:29748"/>
    </ligand>
</feature>
<feature type="binding site" evidence="2">
    <location>
        <position position="500"/>
    </location>
    <ligand>
        <name>Mg(2+)</name>
        <dbReference type="ChEBI" id="CHEBI:18420"/>
    </ligand>
</feature>
<feature type="sequence conflict" description="In Ref. 1; AAA73177." evidence="3" ref="1">
    <original>GAFSAPA</original>
    <variation>ARSPRPR</variation>
    <location>
        <begin position="66"/>
        <end position="72"/>
    </location>
</feature>
<feature type="sequence conflict" description="In Ref. 1; AAA73177." evidence="3" ref="1">
    <original>RQTL</original>
    <variation>ADV</variation>
    <location>
        <begin position="140"/>
        <end position="143"/>
    </location>
</feature>
<organism>
    <name type="scientific">Haloferax volcanii (strain ATCC 29605 / DSM 3757 / JCM 8879 / NBRC 14742 / NCIMB 2012 / VKM B-1768 / DS2)</name>
    <name type="common">Halobacterium volcanii</name>
    <dbReference type="NCBI Taxonomy" id="309800"/>
    <lineage>
        <taxon>Archaea</taxon>
        <taxon>Methanobacteriati</taxon>
        <taxon>Methanobacteriota</taxon>
        <taxon>Stenosarchaea group</taxon>
        <taxon>Halobacteria</taxon>
        <taxon>Halobacteriales</taxon>
        <taxon>Haloferacaceae</taxon>
        <taxon>Haloferax</taxon>
    </lineage>
</organism>
<keyword id="KW-0028">Amino-acid biosynthesis</keyword>
<keyword id="KW-0057">Aromatic amino acid biosynthesis</keyword>
<keyword id="KW-0456">Lyase</keyword>
<keyword id="KW-0460">Magnesium</keyword>
<keyword id="KW-0479">Metal-binding</keyword>
<keyword id="KW-1185">Reference proteome</keyword>
<keyword id="KW-0822">Tryptophan biosynthesis</keyword>
<sequence>MTAPDTDREEFVSLAGDADGPVVTHLVADLDVSVDPLAAYTTLADRSDYGFLLESAEKVSSSNPQGAFSAPATAADSHARFSFVGYDPEAVVTVGPDGVDVTDLGGPAAEFVGAGDGDVLDSLRGALPDLPRVNFPETDRQTLTGGLVGFLAYEAVYDLWLDEVGRERPDTDDPDAEFVLTTRTLSFDHREDAVRLVCTPVVSPDDDPGEVYDGVVAEAERVAEKLRAADDPAPGGFERTGEDAGSREEYEAAVRKTKEHVRDGDIYQGVISRTRKLRGQVDPVGLYASLREVNPSPYMFLLRHGDRRVVGASPETLVSVRGDRVVVNPIAGTCQRGSGPVEDRRLAGELLADAKERAEHTMLVDLGRNDVRRVSTPGSVRVEDFMSIIKYSHVQHIESTVSGTLDADADAFDATRATFPAGTLTGAPKVRAMEIIDDLEAEPRGVYGGGVGYYSWTGDADVAIVIRTATVDSGGADDAITVRAGAGIVADSDPTAEYEETEQKMGGVLDAVRRIEYGTEEASQ</sequence>
<proteinExistence type="inferred from homology"/>
<name>TRPE_HALVD</name>
<accession>P33975</accession>
<accession>D4GT37</accession>
<dbReference type="EC" id="4.1.3.27"/>
<dbReference type="EMBL" id="M83788">
    <property type="protein sequence ID" value="AAA73177.1"/>
    <property type="molecule type" value="Genomic_DNA"/>
</dbReference>
<dbReference type="EMBL" id="CP001956">
    <property type="protein sequence ID" value="ADE02423.1"/>
    <property type="molecule type" value="Genomic_DNA"/>
</dbReference>
<dbReference type="PIR" id="A42301">
    <property type="entry name" value="A42301"/>
</dbReference>
<dbReference type="RefSeq" id="WP_004042367.1">
    <property type="nucleotide sequence ID" value="NC_013967.1"/>
</dbReference>
<dbReference type="SMR" id="P33975"/>
<dbReference type="STRING" id="309800.HVO_2454"/>
<dbReference type="PaxDb" id="309800-C498_07570"/>
<dbReference type="EnsemblBacteria" id="ADE02423">
    <property type="protein sequence ID" value="ADE02423"/>
    <property type="gene ID" value="HVO_2454"/>
</dbReference>
<dbReference type="GeneID" id="8924704"/>
<dbReference type="KEGG" id="hvo:HVO_2454"/>
<dbReference type="eggNOG" id="arCOG02014">
    <property type="taxonomic scope" value="Archaea"/>
</dbReference>
<dbReference type="HOGENOM" id="CLU_006493_9_0_2"/>
<dbReference type="OrthoDB" id="25514at2157"/>
<dbReference type="UniPathway" id="UPA00035">
    <property type="reaction ID" value="UER00040"/>
</dbReference>
<dbReference type="Proteomes" id="UP000008243">
    <property type="component" value="Chromosome"/>
</dbReference>
<dbReference type="GO" id="GO:0004049">
    <property type="term" value="F:anthranilate synthase activity"/>
    <property type="evidence" value="ECO:0007669"/>
    <property type="project" value="UniProtKB-EC"/>
</dbReference>
<dbReference type="GO" id="GO:0046872">
    <property type="term" value="F:metal ion binding"/>
    <property type="evidence" value="ECO:0007669"/>
    <property type="project" value="UniProtKB-KW"/>
</dbReference>
<dbReference type="GO" id="GO:0000162">
    <property type="term" value="P:L-tryptophan biosynthetic process"/>
    <property type="evidence" value="ECO:0007669"/>
    <property type="project" value="UniProtKB-UniPathway"/>
</dbReference>
<dbReference type="Gene3D" id="3.60.120.10">
    <property type="entry name" value="Anthranilate synthase"/>
    <property type="match status" value="1"/>
</dbReference>
<dbReference type="InterPro" id="IPR005801">
    <property type="entry name" value="ADC_synthase"/>
</dbReference>
<dbReference type="InterPro" id="IPR019999">
    <property type="entry name" value="Anth_synth_I-like"/>
</dbReference>
<dbReference type="InterPro" id="IPR006805">
    <property type="entry name" value="Anth_synth_I_N"/>
</dbReference>
<dbReference type="InterPro" id="IPR010116">
    <property type="entry name" value="Anthranilate_synth_I_arc_typ"/>
</dbReference>
<dbReference type="InterPro" id="IPR015890">
    <property type="entry name" value="Chorismate_C"/>
</dbReference>
<dbReference type="NCBIfam" id="TIGR01820">
    <property type="entry name" value="TrpE-arch"/>
    <property type="match status" value="1"/>
</dbReference>
<dbReference type="PANTHER" id="PTHR11236">
    <property type="entry name" value="AMINOBENZOATE/ANTHRANILATE SYNTHASE"/>
    <property type="match status" value="1"/>
</dbReference>
<dbReference type="PANTHER" id="PTHR11236:SF9">
    <property type="entry name" value="ANTHRANILATE SYNTHASE COMPONENT 1"/>
    <property type="match status" value="1"/>
</dbReference>
<dbReference type="Pfam" id="PF04715">
    <property type="entry name" value="Anth_synt_I_N"/>
    <property type="match status" value="1"/>
</dbReference>
<dbReference type="Pfam" id="PF00425">
    <property type="entry name" value="Chorismate_bind"/>
    <property type="match status" value="1"/>
</dbReference>
<dbReference type="PRINTS" id="PR00095">
    <property type="entry name" value="ANTSNTHASEI"/>
</dbReference>
<dbReference type="SUPFAM" id="SSF56322">
    <property type="entry name" value="ADC synthase"/>
    <property type="match status" value="1"/>
</dbReference>